<proteinExistence type="inferred from homology"/>
<gene>
    <name evidence="2" type="primary">tuf</name>
    <name type="ordered locus">BRE_482</name>
</gene>
<comment type="function">
    <text evidence="2">GTP hydrolase that promotes the GTP-dependent binding of aminoacyl-tRNA to the A-site of ribosomes during protein biosynthesis.</text>
</comment>
<comment type="catalytic activity">
    <reaction evidence="2">
        <text>GTP + H2O = GDP + phosphate + H(+)</text>
        <dbReference type="Rhea" id="RHEA:19669"/>
        <dbReference type="ChEBI" id="CHEBI:15377"/>
        <dbReference type="ChEBI" id="CHEBI:15378"/>
        <dbReference type="ChEBI" id="CHEBI:37565"/>
        <dbReference type="ChEBI" id="CHEBI:43474"/>
        <dbReference type="ChEBI" id="CHEBI:58189"/>
        <dbReference type="EC" id="3.6.5.3"/>
    </reaction>
    <physiologicalReaction direction="left-to-right" evidence="2">
        <dbReference type="Rhea" id="RHEA:19670"/>
    </physiologicalReaction>
</comment>
<comment type="subunit">
    <text evidence="2">Monomer.</text>
</comment>
<comment type="subcellular location">
    <subcellularLocation>
        <location evidence="2">Cytoplasm</location>
    </subcellularLocation>
</comment>
<comment type="similarity">
    <text evidence="2">Belongs to the TRAFAC class translation factor GTPase superfamily. Classic translation factor GTPase family. EF-Tu/EF-1A subfamily.</text>
</comment>
<name>EFTU_BORRA</name>
<dbReference type="EC" id="3.6.5.3" evidence="2"/>
<dbReference type="EMBL" id="CP000993">
    <property type="protein sequence ID" value="ACH94714.1"/>
    <property type="molecule type" value="Genomic_DNA"/>
</dbReference>
<dbReference type="RefSeq" id="WP_012538231.1">
    <property type="nucleotide sequence ID" value="NZ_CP169983.1"/>
</dbReference>
<dbReference type="SMR" id="B5RPI0"/>
<dbReference type="KEGG" id="bre:BRE_482"/>
<dbReference type="HOGENOM" id="CLU_007265_0_0_12"/>
<dbReference type="Proteomes" id="UP000000612">
    <property type="component" value="Chromosome"/>
</dbReference>
<dbReference type="GO" id="GO:0005737">
    <property type="term" value="C:cytoplasm"/>
    <property type="evidence" value="ECO:0007669"/>
    <property type="project" value="UniProtKB-SubCell"/>
</dbReference>
<dbReference type="GO" id="GO:0005525">
    <property type="term" value="F:GTP binding"/>
    <property type="evidence" value="ECO:0007669"/>
    <property type="project" value="UniProtKB-UniRule"/>
</dbReference>
<dbReference type="GO" id="GO:0003924">
    <property type="term" value="F:GTPase activity"/>
    <property type="evidence" value="ECO:0007669"/>
    <property type="project" value="InterPro"/>
</dbReference>
<dbReference type="GO" id="GO:0003746">
    <property type="term" value="F:translation elongation factor activity"/>
    <property type="evidence" value="ECO:0007669"/>
    <property type="project" value="UniProtKB-UniRule"/>
</dbReference>
<dbReference type="CDD" id="cd01884">
    <property type="entry name" value="EF_Tu"/>
    <property type="match status" value="1"/>
</dbReference>
<dbReference type="CDD" id="cd03697">
    <property type="entry name" value="EFTU_II"/>
    <property type="match status" value="1"/>
</dbReference>
<dbReference type="CDD" id="cd03707">
    <property type="entry name" value="EFTU_III"/>
    <property type="match status" value="1"/>
</dbReference>
<dbReference type="FunFam" id="2.40.30.10:FF:000001">
    <property type="entry name" value="Elongation factor Tu"/>
    <property type="match status" value="1"/>
</dbReference>
<dbReference type="FunFam" id="3.40.50.300:FF:000576">
    <property type="entry name" value="Elongation factor Tu"/>
    <property type="match status" value="1"/>
</dbReference>
<dbReference type="Gene3D" id="3.40.50.300">
    <property type="entry name" value="P-loop containing nucleotide triphosphate hydrolases"/>
    <property type="match status" value="1"/>
</dbReference>
<dbReference type="Gene3D" id="2.40.30.10">
    <property type="entry name" value="Translation factors"/>
    <property type="match status" value="2"/>
</dbReference>
<dbReference type="HAMAP" id="MF_00118_B">
    <property type="entry name" value="EF_Tu_B"/>
    <property type="match status" value="1"/>
</dbReference>
<dbReference type="InterPro" id="IPR041709">
    <property type="entry name" value="EF-Tu_GTP-bd"/>
</dbReference>
<dbReference type="InterPro" id="IPR050055">
    <property type="entry name" value="EF-Tu_GTPase"/>
</dbReference>
<dbReference type="InterPro" id="IPR004161">
    <property type="entry name" value="EFTu-like_2"/>
</dbReference>
<dbReference type="InterPro" id="IPR033720">
    <property type="entry name" value="EFTU_2"/>
</dbReference>
<dbReference type="InterPro" id="IPR031157">
    <property type="entry name" value="G_TR_CS"/>
</dbReference>
<dbReference type="InterPro" id="IPR027417">
    <property type="entry name" value="P-loop_NTPase"/>
</dbReference>
<dbReference type="InterPro" id="IPR005225">
    <property type="entry name" value="Small_GTP-bd"/>
</dbReference>
<dbReference type="InterPro" id="IPR000795">
    <property type="entry name" value="T_Tr_GTP-bd_dom"/>
</dbReference>
<dbReference type="InterPro" id="IPR009000">
    <property type="entry name" value="Transl_B-barrel_sf"/>
</dbReference>
<dbReference type="InterPro" id="IPR009001">
    <property type="entry name" value="Transl_elong_EF1A/Init_IF2_C"/>
</dbReference>
<dbReference type="InterPro" id="IPR004541">
    <property type="entry name" value="Transl_elong_EFTu/EF1A_bac/org"/>
</dbReference>
<dbReference type="InterPro" id="IPR004160">
    <property type="entry name" value="Transl_elong_EFTu/EF1A_C"/>
</dbReference>
<dbReference type="NCBIfam" id="TIGR00485">
    <property type="entry name" value="EF-Tu"/>
    <property type="match status" value="1"/>
</dbReference>
<dbReference type="NCBIfam" id="NF000766">
    <property type="entry name" value="PRK00049.1"/>
    <property type="match status" value="1"/>
</dbReference>
<dbReference type="NCBIfam" id="NF009372">
    <property type="entry name" value="PRK12735.1"/>
    <property type="match status" value="1"/>
</dbReference>
<dbReference type="NCBIfam" id="NF009373">
    <property type="entry name" value="PRK12736.1"/>
    <property type="match status" value="1"/>
</dbReference>
<dbReference type="NCBIfam" id="TIGR00231">
    <property type="entry name" value="small_GTP"/>
    <property type="match status" value="1"/>
</dbReference>
<dbReference type="PANTHER" id="PTHR43721:SF22">
    <property type="entry name" value="ELONGATION FACTOR TU, MITOCHONDRIAL"/>
    <property type="match status" value="1"/>
</dbReference>
<dbReference type="PANTHER" id="PTHR43721">
    <property type="entry name" value="ELONGATION FACTOR TU-RELATED"/>
    <property type="match status" value="1"/>
</dbReference>
<dbReference type="Pfam" id="PF00009">
    <property type="entry name" value="GTP_EFTU"/>
    <property type="match status" value="1"/>
</dbReference>
<dbReference type="Pfam" id="PF03144">
    <property type="entry name" value="GTP_EFTU_D2"/>
    <property type="match status" value="1"/>
</dbReference>
<dbReference type="Pfam" id="PF03143">
    <property type="entry name" value="GTP_EFTU_D3"/>
    <property type="match status" value="1"/>
</dbReference>
<dbReference type="PRINTS" id="PR00315">
    <property type="entry name" value="ELONGATNFCT"/>
</dbReference>
<dbReference type="SUPFAM" id="SSF50465">
    <property type="entry name" value="EF-Tu/eEF-1alpha/eIF2-gamma C-terminal domain"/>
    <property type="match status" value="1"/>
</dbReference>
<dbReference type="SUPFAM" id="SSF52540">
    <property type="entry name" value="P-loop containing nucleoside triphosphate hydrolases"/>
    <property type="match status" value="1"/>
</dbReference>
<dbReference type="SUPFAM" id="SSF50447">
    <property type="entry name" value="Translation proteins"/>
    <property type="match status" value="1"/>
</dbReference>
<dbReference type="PROSITE" id="PS00301">
    <property type="entry name" value="G_TR_1"/>
    <property type="match status" value="1"/>
</dbReference>
<dbReference type="PROSITE" id="PS51722">
    <property type="entry name" value="G_TR_2"/>
    <property type="match status" value="1"/>
</dbReference>
<keyword id="KW-0963">Cytoplasm</keyword>
<keyword id="KW-0251">Elongation factor</keyword>
<keyword id="KW-0342">GTP-binding</keyword>
<keyword id="KW-0378">Hydrolase</keyword>
<keyword id="KW-0460">Magnesium</keyword>
<keyword id="KW-0479">Metal-binding</keyword>
<keyword id="KW-0547">Nucleotide-binding</keyword>
<keyword id="KW-0648">Protein biosynthesis</keyword>
<feature type="chain" id="PRO_1000095053" description="Elongation factor Tu">
    <location>
        <begin position="1"/>
        <end position="394"/>
    </location>
</feature>
<feature type="domain" description="tr-type G">
    <location>
        <begin position="10"/>
        <end position="205"/>
    </location>
</feature>
<feature type="region of interest" description="G1" evidence="1">
    <location>
        <begin position="19"/>
        <end position="26"/>
    </location>
</feature>
<feature type="region of interest" description="G2" evidence="1">
    <location>
        <begin position="61"/>
        <end position="65"/>
    </location>
</feature>
<feature type="region of interest" description="G3" evidence="1">
    <location>
        <begin position="82"/>
        <end position="85"/>
    </location>
</feature>
<feature type="region of interest" description="G4" evidence="1">
    <location>
        <begin position="137"/>
        <end position="140"/>
    </location>
</feature>
<feature type="region of interest" description="G5" evidence="1">
    <location>
        <begin position="173"/>
        <end position="175"/>
    </location>
</feature>
<feature type="binding site" evidence="2">
    <location>
        <begin position="19"/>
        <end position="26"/>
    </location>
    <ligand>
        <name>GTP</name>
        <dbReference type="ChEBI" id="CHEBI:37565"/>
    </ligand>
</feature>
<feature type="binding site" evidence="2">
    <location>
        <position position="26"/>
    </location>
    <ligand>
        <name>Mg(2+)</name>
        <dbReference type="ChEBI" id="CHEBI:18420"/>
    </ligand>
</feature>
<feature type="binding site" evidence="2">
    <location>
        <begin position="82"/>
        <end position="86"/>
    </location>
    <ligand>
        <name>GTP</name>
        <dbReference type="ChEBI" id="CHEBI:37565"/>
    </ligand>
</feature>
<feature type="binding site" evidence="2">
    <location>
        <begin position="137"/>
        <end position="140"/>
    </location>
    <ligand>
        <name>GTP</name>
        <dbReference type="ChEBI" id="CHEBI:37565"/>
    </ligand>
</feature>
<protein>
    <recommendedName>
        <fullName evidence="2">Elongation factor Tu</fullName>
        <shortName evidence="2">EF-Tu</shortName>
        <ecNumber evidence="2">3.6.5.3</ecNumber>
    </recommendedName>
</protein>
<accession>B5RPI0</accession>
<reference key="1">
    <citation type="journal article" date="2008" name="PLoS Genet.">
        <title>The genome of Borrelia recurrentis, the agent of deadly louse-borne relapsing fever, is a degraded subset of tick-borne Borrelia duttonii.</title>
        <authorList>
            <person name="Lescot M."/>
            <person name="Audic S."/>
            <person name="Robert C."/>
            <person name="Nguyen T.T."/>
            <person name="Blanc G."/>
            <person name="Cutler S.J."/>
            <person name="Wincker P."/>
            <person name="Couloux A."/>
            <person name="Claverie J.-M."/>
            <person name="Raoult D."/>
            <person name="Drancourt M."/>
        </authorList>
    </citation>
    <scope>NUCLEOTIDE SEQUENCE [LARGE SCALE GENOMIC DNA]</scope>
    <source>
        <strain>A1</strain>
    </source>
</reference>
<evidence type="ECO:0000250" key="1"/>
<evidence type="ECO:0000255" key="2">
    <source>
        <dbReference type="HAMAP-Rule" id="MF_00118"/>
    </source>
</evidence>
<sequence length="394" mass="43462">MAKEIFQRTKPHMNVGTIGHVDHGKTTLTAAISIYCSKVNKDAKALKYEDIDNAPEEKARGITINARHIEYETANRHYAHVDCPGHADYIKNMITGAAQMDAAILLVAADSGAEPQTKEHLLLAQRMGIKKIIVFLNKLDLADPELVELVEVEVLELVEKYGFPSDTPIVKGSAFGAMSNPDDPEATKCIKELLETMDNYFDLPERDIDKPFLLAIEDVFSISGRGTVATGRIERGVIKVGQEVEIVGIRETRKTTVTGVEMFQKILEQGEAGDNVGLLLRGVDKKDIERGQVIAALGTITPHKKFKASIYCLTKEEGGRHKPFFSGYRPQFFFRTTDVTGMVSLEGKEMVMPGDNVDIVVELISSIAMDKNVEFAVREGGRTVASGRILEILE</sequence>
<organism>
    <name type="scientific">Borrelia recurrentis (strain A1)</name>
    <dbReference type="NCBI Taxonomy" id="412418"/>
    <lineage>
        <taxon>Bacteria</taxon>
        <taxon>Pseudomonadati</taxon>
        <taxon>Spirochaetota</taxon>
        <taxon>Spirochaetia</taxon>
        <taxon>Spirochaetales</taxon>
        <taxon>Borreliaceae</taxon>
        <taxon>Borrelia</taxon>
    </lineage>
</organism>